<keyword id="KW-0004">4Fe-4S</keyword>
<keyword id="KW-0342">GTP-binding</keyword>
<keyword id="KW-0408">Iron</keyword>
<keyword id="KW-0411">Iron-sulfur</keyword>
<keyword id="KW-0456">Lyase</keyword>
<keyword id="KW-0479">Metal-binding</keyword>
<keyword id="KW-0501">Molybdenum cofactor biosynthesis</keyword>
<keyword id="KW-0547">Nucleotide-binding</keyword>
<keyword id="KW-0949">S-adenosyl-L-methionine</keyword>
<protein>
    <recommendedName>
        <fullName evidence="1">GTP 3',8-cyclase</fullName>
        <ecNumber evidence="1">4.1.99.22</ecNumber>
    </recommendedName>
    <alternativeName>
        <fullName evidence="1">Molybdenum cofactor biosynthesis protein A</fullName>
    </alternativeName>
</protein>
<gene>
    <name evidence="1" type="primary">moaA</name>
    <name type="ordered locus">SA2063</name>
</gene>
<evidence type="ECO:0000255" key="1">
    <source>
        <dbReference type="HAMAP-Rule" id="MF_01225"/>
    </source>
</evidence>
<evidence type="ECO:0000255" key="2">
    <source>
        <dbReference type="PROSITE-ProRule" id="PRU01266"/>
    </source>
</evidence>
<sequence>MVEQIKDKLGRPIRDLRLSVTDRCNFRCDYCMPKEVFGDDFVFLPKNELLTFDEMARIAKVYAELGVKKIRITGGEPLMRRDLDVLIAKLNQIDGIEDIGLTTNGLLLKKHGQKLYDAGLRRINVSLDAIDDTLFQSINNRNIKATTILEQIDYATSIGLNVKVNVVIQKGINDDQIIPMLEYFKDKHIEIRFIEFMDVGNDNGWDFSKVVTKDEMLTMIEQHFEIDPVEPKYFGEVAKYYRHKDNGVQFGLITSVSQSFCSTCTRARLSSDGKFYGCLFATVDGFNVKAFIRSGVTDEELKEQFKALWQIRDDRYSDERTAQTVANRQRKKINMNYIGG</sequence>
<accession>P65388</accession>
<accession>Q99S04</accession>
<organism>
    <name type="scientific">Staphylococcus aureus (strain N315)</name>
    <dbReference type="NCBI Taxonomy" id="158879"/>
    <lineage>
        <taxon>Bacteria</taxon>
        <taxon>Bacillati</taxon>
        <taxon>Bacillota</taxon>
        <taxon>Bacilli</taxon>
        <taxon>Bacillales</taxon>
        <taxon>Staphylococcaceae</taxon>
        <taxon>Staphylococcus</taxon>
    </lineage>
</organism>
<dbReference type="EC" id="4.1.99.22" evidence="1"/>
<dbReference type="EMBL" id="BA000018">
    <property type="protein sequence ID" value="BAB43360.1"/>
    <property type="molecule type" value="Genomic_DNA"/>
</dbReference>
<dbReference type="PIR" id="G90024">
    <property type="entry name" value="G90024"/>
</dbReference>
<dbReference type="RefSeq" id="WP_000230173.1">
    <property type="nucleotide sequence ID" value="NC_002745.2"/>
</dbReference>
<dbReference type="SMR" id="P65388"/>
<dbReference type="EnsemblBacteria" id="BAB43360">
    <property type="protein sequence ID" value="BAB43360"/>
    <property type="gene ID" value="BAB43360"/>
</dbReference>
<dbReference type="KEGG" id="sau:SA2063"/>
<dbReference type="HOGENOM" id="CLU_009273_0_1_9"/>
<dbReference type="BRENDA" id="4.1.99.22">
    <property type="organism ID" value="3352"/>
</dbReference>
<dbReference type="UniPathway" id="UPA00344"/>
<dbReference type="EvolutionaryTrace" id="P65388"/>
<dbReference type="GO" id="GO:0051539">
    <property type="term" value="F:4 iron, 4 sulfur cluster binding"/>
    <property type="evidence" value="ECO:0007669"/>
    <property type="project" value="UniProtKB-UniRule"/>
</dbReference>
<dbReference type="GO" id="GO:0061799">
    <property type="term" value="F:cyclic pyranopterin monophosphate synthase activity"/>
    <property type="evidence" value="ECO:0007669"/>
    <property type="project" value="TreeGrafter"/>
</dbReference>
<dbReference type="GO" id="GO:0061798">
    <property type="term" value="F:GTP 3',8'-cyclase activity"/>
    <property type="evidence" value="ECO:0007669"/>
    <property type="project" value="UniProtKB-UniRule"/>
</dbReference>
<dbReference type="GO" id="GO:0005525">
    <property type="term" value="F:GTP binding"/>
    <property type="evidence" value="ECO:0007669"/>
    <property type="project" value="UniProtKB-UniRule"/>
</dbReference>
<dbReference type="GO" id="GO:0046872">
    <property type="term" value="F:metal ion binding"/>
    <property type="evidence" value="ECO:0007669"/>
    <property type="project" value="UniProtKB-KW"/>
</dbReference>
<dbReference type="GO" id="GO:1904047">
    <property type="term" value="F:S-adenosyl-L-methionine binding"/>
    <property type="evidence" value="ECO:0007669"/>
    <property type="project" value="UniProtKB-UniRule"/>
</dbReference>
<dbReference type="GO" id="GO:0006777">
    <property type="term" value="P:Mo-molybdopterin cofactor biosynthetic process"/>
    <property type="evidence" value="ECO:0007669"/>
    <property type="project" value="UniProtKB-UniRule"/>
</dbReference>
<dbReference type="CDD" id="cd01335">
    <property type="entry name" value="Radical_SAM"/>
    <property type="match status" value="1"/>
</dbReference>
<dbReference type="CDD" id="cd21117">
    <property type="entry name" value="Twitch_MoaA"/>
    <property type="match status" value="1"/>
</dbReference>
<dbReference type="Gene3D" id="3.20.20.70">
    <property type="entry name" value="Aldolase class I"/>
    <property type="match status" value="1"/>
</dbReference>
<dbReference type="HAMAP" id="MF_01225_B">
    <property type="entry name" value="MoaA_B"/>
    <property type="match status" value="1"/>
</dbReference>
<dbReference type="InterPro" id="IPR013785">
    <property type="entry name" value="Aldolase_TIM"/>
</dbReference>
<dbReference type="InterPro" id="IPR006638">
    <property type="entry name" value="Elp3/MiaA/NifB-like_rSAM"/>
</dbReference>
<dbReference type="InterPro" id="IPR013483">
    <property type="entry name" value="MoaA"/>
</dbReference>
<dbReference type="InterPro" id="IPR000385">
    <property type="entry name" value="MoaA_NifB_PqqE_Fe-S-bd_CS"/>
</dbReference>
<dbReference type="InterPro" id="IPR010505">
    <property type="entry name" value="MoaA_twitch"/>
</dbReference>
<dbReference type="InterPro" id="IPR050105">
    <property type="entry name" value="MoCo_biosynth_MoaA/MoaC"/>
</dbReference>
<dbReference type="InterPro" id="IPR007197">
    <property type="entry name" value="rSAM"/>
</dbReference>
<dbReference type="NCBIfam" id="TIGR02666">
    <property type="entry name" value="moaA"/>
    <property type="match status" value="1"/>
</dbReference>
<dbReference type="PANTHER" id="PTHR22960:SF0">
    <property type="entry name" value="MOLYBDENUM COFACTOR BIOSYNTHESIS PROTEIN 1"/>
    <property type="match status" value="1"/>
</dbReference>
<dbReference type="PANTHER" id="PTHR22960">
    <property type="entry name" value="MOLYBDOPTERIN COFACTOR SYNTHESIS PROTEIN A"/>
    <property type="match status" value="1"/>
</dbReference>
<dbReference type="Pfam" id="PF06463">
    <property type="entry name" value="Mob_synth_C"/>
    <property type="match status" value="1"/>
</dbReference>
<dbReference type="Pfam" id="PF04055">
    <property type="entry name" value="Radical_SAM"/>
    <property type="match status" value="1"/>
</dbReference>
<dbReference type="SFLD" id="SFLDF00276">
    <property type="entry name" value="cyclic_pyranopterin_phosphate"/>
    <property type="match status" value="1"/>
</dbReference>
<dbReference type="SFLD" id="SFLDG01216">
    <property type="entry name" value="thioether_bond_formation_requi"/>
    <property type="match status" value="1"/>
</dbReference>
<dbReference type="SMART" id="SM00729">
    <property type="entry name" value="Elp3"/>
    <property type="match status" value="1"/>
</dbReference>
<dbReference type="SUPFAM" id="SSF102114">
    <property type="entry name" value="Radical SAM enzymes"/>
    <property type="match status" value="1"/>
</dbReference>
<dbReference type="PROSITE" id="PS01305">
    <property type="entry name" value="MOAA_NIFB_PQQE"/>
    <property type="match status" value="1"/>
</dbReference>
<dbReference type="PROSITE" id="PS51918">
    <property type="entry name" value="RADICAL_SAM"/>
    <property type="match status" value="1"/>
</dbReference>
<feature type="chain" id="PRO_0000152992" description="GTP 3',8-cyclase">
    <location>
        <begin position="1"/>
        <end position="340"/>
    </location>
</feature>
<feature type="domain" description="Radical SAM core" evidence="2">
    <location>
        <begin position="8"/>
        <end position="227"/>
    </location>
</feature>
<feature type="binding site" evidence="1">
    <location>
        <position position="17"/>
    </location>
    <ligand>
        <name>GTP</name>
        <dbReference type="ChEBI" id="CHEBI:37565"/>
    </ligand>
</feature>
<feature type="binding site" evidence="1">
    <location>
        <position position="24"/>
    </location>
    <ligand>
        <name>[4Fe-4S] cluster</name>
        <dbReference type="ChEBI" id="CHEBI:49883"/>
        <label>1</label>
        <note>4Fe-4S-S-AdoMet</note>
    </ligand>
</feature>
<feature type="binding site" evidence="1">
    <location>
        <position position="28"/>
    </location>
    <ligand>
        <name>[4Fe-4S] cluster</name>
        <dbReference type="ChEBI" id="CHEBI:49883"/>
        <label>1</label>
        <note>4Fe-4S-S-AdoMet</note>
    </ligand>
</feature>
<feature type="binding site" evidence="1">
    <location>
        <position position="30"/>
    </location>
    <ligand>
        <name>S-adenosyl-L-methionine</name>
        <dbReference type="ChEBI" id="CHEBI:59789"/>
    </ligand>
</feature>
<feature type="binding site" evidence="1">
    <location>
        <position position="31"/>
    </location>
    <ligand>
        <name>[4Fe-4S] cluster</name>
        <dbReference type="ChEBI" id="CHEBI:49883"/>
        <label>1</label>
        <note>4Fe-4S-S-AdoMet</note>
    </ligand>
</feature>
<feature type="binding site" evidence="1">
    <location>
        <position position="71"/>
    </location>
    <ligand>
        <name>GTP</name>
        <dbReference type="ChEBI" id="CHEBI:37565"/>
    </ligand>
</feature>
<feature type="binding site" evidence="1">
    <location>
        <position position="75"/>
    </location>
    <ligand>
        <name>S-adenosyl-L-methionine</name>
        <dbReference type="ChEBI" id="CHEBI:59789"/>
    </ligand>
</feature>
<feature type="binding site" evidence="1">
    <location>
        <position position="102"/>
    </location>
    <ligand>
        <name>GTP</name>
        <dbReference type="ChEBI" id="CHEBI:37565"/>
    </ligand>
</feature>
<feature type="binding site" evidence="1">
    <location>
        <position position="126"/>
    </location>
    <ligand>
        <name>S-adenosyl-L-methionine</name>
        <dbReference type="ChEBI" id="CHEBI:59789"/>
    </ligand>
</feature>
<feature type="binding site" evidence="1">
    <location>
        <position position="163"/>
    </location>
    <ligand>
        <name>GTP</name>
        <dbReference type="ChEBI" id="CHEBI:37565"/>
    </ligand>
</feature>
<feature type="binding site" evidence="1">
    <location>
        <position position="197"/>
    </location>
    <ligand>
        <name>S-adenosyl-L-methionine</name>
        <dbReference type="ChEBI" id="CHEBI:59789"/>
    </ligand>
</feature>
<feature type="binding site" evidence="1">
    <location>
        <position position="261"/>
    </location>
    <ligand>
        <name>[4Fe-4S] cluster</name>
        <dbReference type="ChEBI" id="CHEBI:49883"/>
        <label>2</label>
        <note>4Fe-4S-substrate</note>
    </ligand>
</feature>
<feature type="binding site" evidence="1">
    <location>
        <position position="264"/>
    </location>
    <ligand>
        <name>[4Fe-4S] cluster</name>
        <dbReference type="ChEBI" id="CHEBI:49883"/>
        <label>2</label>
        <note>4Fe-4S-substrate</note>
    </ligand>
</feature>
<feature type="binding site" evidence="1">
    <location>
        <begin position="266"/>
        <end position="268"/>
    </location>
    <ligand>
        <name>GTP</name>
        <dbReference type="ChEBI" id="CHEBI:37565"/>
    </ligand>
</feature>
<feature type="binding site" evidence="1">
    <location>
        <position position="278"/>
    </location>
    <ligand>
        <name>[4Fe-4S] cluster</name>
        <dbReference type="ChEBI" id="CHEBI:49883"/>
        <label>2</label>
        <note>4Fe-4S-substrate</note>
    </ligand>
</feature>
<proteinExistence type="inferred from homology"/>
<comment type="function">
    <text evidence="1">Catalyzes the cyclization of GTP to (8S)-3',8-cyclo-7,8-dihydroguanosine 5'-triphosphate.</text>
</comment>
<comment type="catalytic activity">
    <reaction evidence="1">
        <text>GTP + AH2 + S-adenosyl-L-methionine = (8S)-3',8-cyclo-7,8-dihydroguanosine 5'-triphosphate + 5'-deoxyadenosine + L-methionine + A + H(+)</text>
        <dbReference type="Rhea" id="RHEA:49576"/>
        <dbReference type="ChEBI" id="CHEBI:13193"/>
        <dbReference type="ChEBI" id="CHEBI:15378"/>
        <dbReference type="ChEBI" id="CHEBI:17319"/>
        <dbReference type="ChEBI" id="CHEBI:17499"/>
        <dbReference type="ChEBI" id="CHEBI:37565"/>
        <dbReference type="ChEBI" id="CHEBI:57844"/>
        <dbReference type="ChEBI" id="CHEBI:59789"/>
        <dbReference type="ChEBI" id="CHEBI:131766"/>
        <dbReference type="EC" id="4.1.99.22"/>
    </reaction>
</comment>
<comment type="cofactor">
    <cofactor evidence="1">
        <name>[4Fe-4S] cluster</name>
        <dbReference type="ChEBI" id="CHEBI:49883"/>
    </cofactor>
    <text evidence="1">Binds 2 [4Fe-4S] clusters. Binds 1 [4Fe-4S] cluster coordinated with 3 cysteines and an exchangeable S-adenosyl-L-methionine and 1 [4Fe-4S] cluster coordinated with 3 cysteines and the GTP-derived substrate.</text>
</comment>
<comment type="pathway">
    <text evidence="1">Cofactor biosynthesis; molybdopterin biosynthesis.</text>
</comment>
<comment type="subunit">
    <text evidence="1">Monomer and homodimer.</text>
</comment>
<comment type="similarity">
    <text evidence="1">Belongs to the radical SAM superfamily. MoaA family.</text>
</comment>
<name>MOAA_STAAN</name>
<reference key="1">
    <citation type="journal article" date="2001" name="Lancet">
        <title>Whole genome sequencing of meticillin-resistant Staphylococcus aureus.</title>
        <authorList>
            <person name="Kuroda M."/>
            <person name="Ohta T."/>
            <person name="Uchiyama I."/>
            <person name="Baba T."/>
            <person name="Yuzawa H."/>
            <person name="Kobayashi I."/>
            <person name="Cui L."/>
            <person name="Oguchi A."/>
            <person name="Aoki K."/>
            <person name="Nagai Y."/>
            <person name="Lian J.-Q."/>
            <person name="Ito T."/>
            <person name="Kanamori M."/>
            <person name="Matsumaru H."/>
            <person name="Maruyama A."/>
            <person name="Murakami H."/>
            <person name="Hosoyama A."/>
            <person name="Mizutani-Ui Y."/>
            <person name="Takahashi N.K."/>
            <person name="Sawano T."/>
            <person name="Inoue R."/>
            <person name="Kaito C."/>
            <person name="Sekimizu K."/>
            <person name="Hirakawa H."/>
            <person name="Kuhara S."/>
            <person name="Goto S."/>
            <person name="Yabuzaki J."/>
            <person name="Kanehisa M."/>
            <person name="Yamashita A."/>
            <person name="Oshima K."/>
            <person name="Furuya K."/>
            <person name="Yoshino C."/>
            <person name="Shiba T."/>
            <person name="Hattori M."/>
            <person name="Ogasawara N."/>
            <person name="Hayashi H."/>
            <person name="Hiramatsu K."/>
        </authorList>
    </citation>
    <scope>NUCLEOTIDE SEQUENCE [LARGE SCALE GENOMIC DNA]</scope>
    <source>
        <strain>N315</strain>
    </source>
</reference>